<name>GLPK_NATTJ</name>
<accession>B2A2C4</accession>
<dbReference type="EC" id="2.7.1.30" evidence="1"/>
<dbReference type="EMBL" id="CP001034">
    <property type="protein sequence ID" value="ACB86230.1"/>
    <property type="molecule type" value="Genomic_DNA"/>
</dbReference>
<dbReference type="RefSeq" id="WP_012449067.1">
    <property type="nucleotide sequence ID" value="NC_010718.1"/>
</dbReference>
<dbReference type="SMR" id="B2A2C4"/>
<dbReference type="FunCoup" id="B2A2C4">
    <property type="interactions" value="283"/>
</dbReference>
<dbReference type="STRING" id="457570.Nther_2675"/>
<dbReference type="KEGG" id="nth:Nther_2675"/>
<dbReference type="eggNOG" id="COG0554">
    <property type="taxonomic scope" value="Bacteria"/>
</dbReference>
<dbReference type="HOGENOM" id="CLU_009281_2_3_9"/>
<dbReference type="InParanoid" id="B2A2C4"/>
<dbReference type="OrthoDB" id="9805576at2"/>
<dbReference type="UniPathway" id="UPA00618">
    <property type="reaction ID" value="UER00672"/>
</dbReference>
<dbReference type="Proteomes" id="UP000001683">
    <property type="component" value="Chromosome"/>
</dbReference>
<dbReference type="GO" id="GO:0005829">
    <property type="term" value="C:cytosol"/>
    <property type="evidence" value="ECO:0007669"/>
    <property type="project" value="TreeGrafter"/>
</dbReference>
<dbReference type="GO" id="GO:0005524">
    <property type="term" value="F:ATP binding"/>
    <property type="evidence" value="ECO:0007669"/>
    <property type="project" value="UniProtKB-UniRule"/>
</dbReference>
<dbReference type="GO" id="GO:0004370">
    <property type="term" value="F:glycerol kinase activity"/>
    <property type="evidence" value="ECO:0000250"/>
    <property type="project" value="UniProtKB"/>
</dbReference>
<dbReference type="GO" id="GO:0019563">
    <property type="term" value="P:glycerol catabolic process"/>
    <property type="evidence" value="ECO:0007669"/>
    <property type="project" value="UniProtKB-UniRule"/>
</dbReference>
<dbReference type="GO" id="GO:0006071">
    <property type="term" value="P:glycerol metabolic process"/>
    <property type="evidence" value="ECO:0000250"/>
    <property type="project" value="UniProtKB"/>
</dbReference>
<dbReference type="GO" id="GO:0006072">
    <property type="term" value="P:glycerol-3-phosphate metabolic process"/>
    <property type="evidence" value="ECO:0007669"/>
    <property type="project" value="InterPro"/>
</dbReference>
<dbReference type="CDD" id="cd07786">
    <property type="entry name" value="FGGY_EcGK_like"/>
    <property type="match status" value="1"/>
</dbReference>
<dbReference type="FunFam" id="3.30.420.40:FF:000007">
    <property type="entry name" value="Glycerol kinase"/>
    <property type="match status" value="1"/>
</dbReference>
<dbReference type="FunFam" id="3.30.420.40:FF:000008">
    <property type="entry name" value="Glycerol kinase"/>
    <property type="match status" value="1"/>
</dbReference>
<dbReference type="Gene3D" id="3.30.420.40">
    <property type="match status" value="2"/>
</dbReference>
<dbReference type="HAMAP" id="MF_00186">
    <property type="entry name" value="Glycerol_kin"/>
    <property type="match status" value="1"/>
</dbReference>
<dbReference type="InterPro" id="IPR043129">
    <property type="entry name" value="ATPase_NBD"/>
</dbReference>
<dbReference type="InterPro" id="IPR000577">
    <property type="entry name" value="Carb_kinase_FGGY"/>
</dbReference>
<dbReference type="InterPro" id="IPR018483">
    <property type="entry name" value="Carb_kinase_FGGY_CS"/>
</dbReference>
<dbReference type="InterPro" id="IPR018485">
    <property type="entry name" value="FGGY_C"/>
</dbReference>
<dbReference type="InterPro" id="IPR018484">
    <property type="entry name" value="FGGY_N"/>
</dbReference>
<dbReference type="InterPro" id="IPR005999">
    <property type="entry name" value="Glycerol_kin"/>
</dbReference>
<dbReference type="NCBIfam" id="TIGR01311">
    <property type="entry name" value="glycerol_kin"/>
    <property type="match status" value="1"/>
</dbReference>
<dbReference type="NCBIfam" id="NF000756">
    <property type="entry name" value="PRK00047.1"/>
    <property type="match status" value="1"/>
</dbReference>
<dbReference type="PANTHER" id="PTHR10196:SF69">
    <property type="entry name" value="GLYCEROL KINASE"/>
    <property type="match status" value="1"/>
</dbReference>
<dbReference type="PANTHER" id="PTHR10196">
    <property type="entry name" value="SUGAR KINASE"/>
    <property type="match status" value="1"/>
</dbReference>
<dbReference type="Pfam" id="PF02782">
    <property type="entry name" value="FGGY_C"/>
    <property type="match status" value="1"/>
</dbReference>
<dbReference type="Pfam" id="PF00370">
    <property type="entry name" value="FGGY_N"/>
    <property type="match status" value="1"/>
</dbReference>
<dbReference type="PIRSF" id="PIRSF000538">
    <property type="entry name" value="GlpK"/>
    <property type="match status" value="1"/>
</dbReference>
<dbReference type="SUPFAM" id="SSF53067">
    <property type="entry name" value="Actin-like ATPase domain"/>
    <property type="match status" value="2"/>
</dbReference>
<dbReference type="PROSITE" id="PS00933">
    <property type="entry name" value="FGGY_KINASES_1"/>
    <property type="match status" value="1"/>
</dbReference>
<dbReference type="PROSITE" id="PS00445">
    <property type="entry name" value="FGGY_KINASES_2"/>
    <property type="match status" value="1"/>
</dbReference>
<organism>
    <name type="scientific">Natranaerobius thermophilus (strain ATCC BAA-1301 / DSM 18059 / JW/NM-WN-LF)</name>
    <dbReference type="NCBI Taxonomy" id="457570"/>
    <lineage>
        <taxon>Bacteria</taxon>
        <taxon>Bacillati</taxon>
        <taxon>Bacillota</taxon>
        <taxon>Clostridia</taxon>
        <taxon>Natranaerobiales</taxon>
        <taxon>Natranaerobiaceae</taxon>
        <taxon>Natranaerobius</taxon>
    </lineage>
</organism>
<feature type="chain" id="PRO_1000203958" description="Glycerol kinase">
    <location>
        <begin position="1"/>
        <end position="498"/>
    </location>
</feature>
<feature type="binding site" evidence="1">
    <location>
        <position position="12"/>
    </location>
    <ligand>
        <name>ADP</name>
        <dbReference type="ChEBI" id="CHEBI:456216"/>
    </ligand>
</feature>
<feature type="binding site" evidence="1">
    <location>
        <position position="12"/>
    </location>
    <ligand>
        <name>ATP</name>
        <dbReference type="ChEBI" id="CHEBI:30616"/>
    </ligand>
</feature>
<feature type="binding site" evidence="1">
    <location>
        <position position="12"/>
    </location>
    <ligand>
        <name>sn-glycerol 3-phosphate</name>
        <dbReference type="ChEBI" id="CHEBI:57597"/>
    </ligand>
</feature>
<feature type="binding site" evidence="1">
    <location>
        <position position="13"/>
    </location>
    <ligand>
        <name>ATP</name>
        <dbReference type="ChEBI" id="CHEBI:30616"/>
    </ligand>
</feature>
<feature type="binding site" evidence="1">
    <location>
        <position position="14"/>
    </location>
    <ligand>
        <name>ATP</name>
        <dbReference type="ChEBI" id="CHEBI:30616"/>
    </ligand>
</feature>
<feature type="binding site" evidence="1">
    <location>
        <position position="16"/>
    </location>
    <ligand>
        <name>ADP</name>
        <dbReference type="ChEBI" id="CHEBI:456216"/>
    </ligand>
</feature>
<feature type="binding site" evidence="1">
    <location>
        <position position="82"/>
    </location>
    <ligand>
        <name>glycerol</name>
        <dbReference type="ChEBI" id="CHEBI:17754"/>
    </ligand>
</feature>
<feature type="binding site" evidence="1">
    <location>
        <position position="82"/>
    </location>
    <ligand>
        <name>sn-glycerol 3-phosphate</name>
        <dbReference type="ChEBI" id="CHEBI:57597"/>
    </ligand>
</feature>
<feature type="binding site" evidence="1">
    <location>
        <position position="83"/>
    </location>
    <ligand>
        <name>glycerol</name>
        <dbReference type="ChEBI" id="CHEBI:17754"/>
    </ligand>
</feature>
<feature type="binding site" evidence="1">
    <location>
        <position position="83"/>
    </location>
    <ligand>
        <name>sn-glycerol 3-phosphate</name>
        <dbReference type="ChEBI" id="CHEBI:57597"/>
    </ligand>
</feature>
<feature type="binding site" evidence="1">
    <location>
        <position position="134"/>
    </location>
    <ligand>
        <name>glycerol</name>
        <dbReference type="ChEBI" id="CHEBI:17754"/>
    </ligand>
</feature>
<feature type="binding site" evidence="1">
    <location>
        <position position="134"/>
    </location>
    <ligand>
        <name>sn-glycerol 3-phosphate</name>
        <dbReference type="ChEBI" id="CHEBI:57597"/>
    </ligand>
</feature>
<feature type="binding site" evidence="1">
    <location>
        <position position="244"/>
    </location>
    <ligand>
        <name>glycerol</name>
        <dbReference type="ChEBI" id="CHEBI:17754"/>
    </ligand>
</feature>
<feature type="binding site" evidence="1">
    <location>
        <position position="244"/>
    </location>
    <ligand>
        <name>sn-glycerol 3-phosphate</name>
        <dbReference type="ChEBI" id="CHEBI:57597"/>
    </ligand>
</feature>
<feature type="binding site" evidence="1">
    <location>
        <position position="245"/>
    </location>
    <ligand>
        <name>glycerol</name>
        <dbReference type="ChEBI" id="CHEBI:17754"/>
    </ligand>
</feature>
<feature type="binding site" evidence="1">
    <location>
        <position position="266"/>
    </location>
    <ligand>
        <name>ADP</name>
        <dbReference type="ChEBI" id="CHEBI:456216"/>
    </ligand>
</feature>
<feature type="binding site" evidence="1">
    <location>
        <position position="266"/>
    </location>
    <ligand>
        <name>ATP</name>
        <dbReference type="ChEBI" id="CHEBI:30616"/>
    </ligand>
</feature>
<feature type="binding site" evidence="1">
    <location>
        <position position="309"/>
    </location>
    <ligand>
        <name>ADP</name>
        <dbReference type="ChEBI" id="CHEBI:456216"/>
    </ligand>
</feature>
<feature type="binding site" evidence="1">
    <location>
        <position position="309"/>
    </location>
    <ligand>
        <name>ATP</name>
        <dbReference type="ChEBI" id="CHEBI:30616"/>
    </ligand>
</feature>
<feature type="binding site" evidence="1">
    <location>
        <position position="313"/>
    </location>
    <ligand>
        <name>ATP</name>
        <dbReference type="ChEBI" id="CHEBI:30616"/>
    </ligand>
</feature>
<feature type="binding site" evidence="1">
    <location>
        <position position="410"/>
    </location>
    <ligand>
        <name>ADP</name>
        <dbReference type="ChEBI" id="CHEBI:456216"/>
    </ligand>
</feature>
<feature type="binding site" evidence="1">
    <location>
        <position position="410"/>
    </location>
    <ligand>
        <name>ATP</name>
        <dbReference type="ChEBI" id="CHEBI:30616"/>
    </ligand>
</feature>
<feature type="binding site" evidence="1">
    <location>
        <position position="414"/>
    </location>
    <ligand>
        <name>ADP</name>
        <dbReference type="ChEBI" id="CHEBI:456216"/>
    </ligand>
</feature>
<sequence>MQNYVISLDQGTTSSRAILYDQQGNIVKSAQKEITQHYPQSSWVEHDASEIWGTQSGVLREVLETAGIRPNQIAAIGIANQRETTVIWDKESGKPIHNAIVWQDRRTAPICEELEKQGLKEYIRQNTGLVIDAYFSATKVKWLLDNVNGAREKAKNGQLLFGTVDSWLIWNLTRGHVHVTDYTNASRTMMFNIHELDWDDKILDVLDIPREMLPEIKESSEIYGYTDEHTLGGAQIPISGIAGDQQSALFGQGCFERGMMKNTYGTGCFLLMNTGKDPVISKNGLLTTIAWAIDGEIYYALEGSIFIAGAAVQWLRDNLKLIDTAHDSEYFAGKSDESNGVYVVPAFQGLGAPYWDMYARGAIMGLTRKVGKAEIVRATLESLAYQTRDVVDAMKKDSQLQLQTLRVDGGACQNNLLMQFQSDIIGTTVERPSDIETTARGAAFLAGLAVGFWDKFDLQKVQQIDNKFTPEMDSQERENRYAGWQKAVERTMGWARDS</sequence>
<proteinExistence type="inferred from homology"/>
<gene>
    <name evidence="1" type="primary">glpK</name>
    <name type="ordered locus">Nther_2675</name>
</gene>
<evidence type="ECO:0000255" key="1">
    <source>
        <dbReference type="HAMAP-Rule" id="MF_00186"/>
    </source>
</evidence>
<keyword id="KW-0067">ATP-binding</keyword>
<keyword id="KW-0319">Glycerol metabolism</keyword>
<keyword id="KW-0418">Kinase</keyword>
<keyword id="KW-0547">Nucleotide-binding</keyword>
<keyword id="KW-1185">Reference proteome</keyword>
<keyword id="KW-0808">Transferase</keyword>
<comment type="function">
    <text evidence="1">Key enzyme in the regulation of glycerol uptake and metabolism. Catalyzes the phosphorylation of glycerol to yield sn-glycerol 3-phosphate.</text>
</comment>
<comment type="catalytic activity">
    <reaction evidence="1">
        <text>glycerol + ATP = sn-glycerol 3-phosphate + ADP + H(+)</text>
        <dbReference type="Rhea" id="RHEA:21644"/>
        <dbReference type="ChEBI" id="CHEBI:15378"/>
        <dbReference type="ChEBI" id="CHEBI:17754"/>
        <dbReference type="ChEBI" id="CHEBI:30616"/>
        <dbReference type="ChEBI" id="CHEBI:57597"/>
        <dbReference type="ChEBI" id="CHEBI:456216"/>
        <dbReference type="EC" id="2.7.1.30"/>
    </reaction>
</comment>
<comment type="activity regulation">
    <text evidence="1">Activated by phosphorylation and inhibited by fructose 1,6-bisphosphate (FBP).</text>
</comment>
<comment type="pathway">
    <text evidence="1">Polyol metabolism; glycerol degradation via glycerol kinase pathway; sn-glycerol 3-phosphate from glycerol: step 1/1.</text>
</comment>
<comment type="subunit">
    <text evidence="1">Homotetramer and homodimer (in equilibrium).</text>
</comment>
<comment type="similarity">
    <text evidence="1">Belongs to the FGGY kinase family.</text>
</comment>
<protein>
    <recommendedName>
        <fullName evidence="1">Glycerol kinase</fullName>
        <ecNumber evidence="1">2.7.1.30</ecNumber>
    </recommendedName>
    <alternativeName>
        <fullName evidence="1">ATP:glycerol 3-phosphotransferase</fullName>
    </alternativeName>
    <alternativeName>
        <fullName evidence="1">Glycerokinase</fullName>
        <shortName evidence="1">GK</shortName>
    </alternativeName>
</protein>
<reference key="1">
    <citation type="submission" date="2008-04" db="EMBL/GenBank/DDBJ databases">
        <title>Complete sequence of chromosome of Natranaerobius thermophilus JW/NM-WN-LF.</title>
        <authorList>
            <consortium name="US DOE Joint Genome Institute"/>
            <person name="Copeland A."/>
            <person name="Lucas S."/>
            <person name="Lapidus A."/>
            <person name="Glavina del Rio T."/>
            <person name="Dalin E."/>
            <person name="Tice H."/>
            <person name="Bruce D."/>
            <person name="Goodwin L."/>
            <person name="Pitluck S."/>
            <person name="Chertkov O."/>
            <person name="Brettin T."/>
            <person name="Detter J.C."/>
            <person name="Han C."/>
            <person name="Kuske C.R."/>
            <person name="Schmutz J."/>
            <person name="Larimer F."/>
            <person name="Land M."/>
            <person name="Hauser L."/>
            <person name="Kyrpides N."/>
            <person name="Lykidis A."/>
            <person name="Mesbah N.M."/>
            <person name="Wiegel J."/>
        </authorList>
    </citation>
    <scope>NUCLEOTIDE SEQUENCE [LARGE SCALE GENOMIC DNA]</scope>
    <source>
        <strain>ATCC BAA-1301 / DSM 18059 / JW/NM-WN-LF</strain>
    </source>
</reference>